<reference key="1">
    <citation type="journal article" date="2005" name="Jpn. Agric. Res. Q.">
        <title>Genome sequence of Xanthomonas oryzae pv. oryzae suggests contribution of large numbers of effector genes and insertion sequences to its race diversity.</title>
        <authorList>
            <person name="Ochiai H."/>
            <person name="Inoue Y."/>
            <person name="Takeya M."/>
            <person name="Sasaki A."/>
            <person name="Kaku H."/>
        </authorList>
    </citation>
    <scope>NUCLEOTIDE SEQUENCE [LARGE SCALE GENOMIC DNA]</scope>
    <source>
        <strain>MAFF 311018</strain>
    </source>
</reference>
<name>NFI_XANOM</name>
<protein>
    <recommendedName>
        <fullName evidence="1">Endonuclease V</fullName>
        <ecNumber evidence="1">3.1.21.7</ecNumber>
    </recommendedName>
    <alternativeName>
        <fullName evidence="1">Deoxyinosine 3'endonuclease</fullName>
    </alternativeName>
    <alternativeName>
        <fullName evidence="1">Deoxyribonuclease V</fullName>
        <shortName evidence="1">DNase V</shortName>
    </alternativeName>
</protein>
<proteinExistence type="inferred from homology"/>
<evidence type="ECO:0000255" key="1">
    <source>
        <dbReference type="HAMAP-Rule" id="MF_00801"/>
    </source>
</evidence>
<feature type="chain" id="PRO_1000047009" description="Endonuclease V">
    <location>
        <begin position="1"/>
        <end position="239"/>
    </location>
</feature>
<feature type="binding site" evidence="1">
    <location>
        <position position="48"/>
    </location>
    <ligand>
        <name>Mg(2+)</name>
        <dbReference type="ChEBI" id="CHEBI:18420"/>
    </ligand>
</feature>
<feature type="binding site" evidence="1">
    <location>
        <position position="116"/>
    </location>
    <ligand>
        <name>Mg(2+)</name>
        <dbReference type="ChEBI" id="CHEBI:18420"/>
    </ligand>
</feature>
<feature type="site" description="Interaction with target DNA" evidence="1">
    <location>
        <position position="86"/>
    </location>
</feature>
<dbReference type="EC" id="3.1.21.7" evidence="1"/>
<dbReference type="EMBL" id="AP008229">
    <property type="protein sequence ID" value="BAE68116.1"/>
    <property type="molecule type" value="Genomic_DNA"/>
</dbReference>
<dbReference type="SMR" id="Q2P5R1"/>
<dbReference type="KEGG" id="xom:XOO1361"/>
<dbReference type="HOGENOM" id="CLU_047631_1_0_6"/>
<dbReference type="GO" id="GO:0005737">
    <property type="term" value="C:cytoplasm"/>
    <property type="evidence" value="ECO:0007669"/>
    <property type="project" value="UniProtKB-SubCell"/>
</dbReference>
<dbReference type="GO" id="GO:0043737">
    <property type="term" value="F:deoxyribonuclease V activity"/>
    <property type="evidence" value="ECO:0007669"/>
    <property type="project" value="UniProtKB-UniRule"/>
</dbReference>
<dbReference type="GO" id="GO:0000287">
    <property type="term" value="F:magnesium ion binding"/>
    <property type="evidence" value="ECO:0007669"/>
    <property type="project" value="UniProtKB-UniRule"/>
</dbReference>
<dbReference type="GO" id="GO:0016891">
    <property type="term" value="F:RNA endonuclease activity, producing 5'-phosphomonoesters"/>
    <property type="evidence" value="ECO:0007669"/>
    <property type="project" value="TreeGrafter"/>
</dbReference>
<dbReference type="GO" id="GO:0003727">
    <property type="term" value="F:single-stranded RNA binding"/>
    <property type="evidence" value="ECO:0007669"/>
    <property type="project" value="TreeGrafter"/>
</dbReference>
<dbReference type="GO" id="GO:0006281">
    <property type="term" value="P:DNA repair"/>
    <property type="evidence" value="ECO:0007669"/>
    <property type="project" value="UniProtKB-UniRule"/>
</dbReference>
<dbReference type="CDD" id="cd06559">
    <property type="entry name" value="Endonuclease_V"/>
    <property type="match status" value="1"/>
</dbReference>
<dbReference type="FunFam" id="3.30.2170.10:FF:000001">
    <property type="entry name" value="Endonuclease V"/>
    <property type="match status" value="1"/>
</dbReference>
<dbReference type="Gene3D" id="3.30.2170.10">
    <property type="entry name" value="archaeoglobus fulgidus dsm 4304 superfamily"/>
    <property type="match status" value="1"/>
</dbReference>
<dbReference type="HAMAP" id="MF_00801">
    <property type="entry name" value="Endonuclease_5"/>
    <property type="match status" value="1"/>
</dbReference>
<dbReference type="InterPro" id="IPR007581">
    <property type="entry name" value="Endonuclease-V"/>
</dbReference>
<dbReference type="NCBIfam" id="NF008629">
    <property type="entry name" value="PRK11617.1"/>
    <property type="match status" value="1"/>
</dbReference>
<dbReference type="PANTHER" id="PTHR28511">
    <property type="entry name" value="ENDONUCLEASE V"/>
    <property type="match status" value="1"/>
</dbReference>
<dbReference type="PANTHER" id="PTHR28511:SF1">
    <property type="entry name" value="ENDONUCLEASE V"/>
    <property type="match status" value="1"/>
</dbReference>
<dbReference type="Pfam" id="PF04493">
    <property type="entry name" value="Endonuclease_5"/>
    <property type="match status" value="1"/>
</dbReference>
<comment type="function">
    <text evidence="1">DNA repair enzyme involved in the repair of deaminated bases. Selectively cleaves double-stranded DNA at the second phosphodiester bond 3' to a deoxyinosine leaving behind the intact lesion on the nicked DNA.</text>
</comment>
<comment type="catalytic activity">
    <reaction evidence="1">
        <text>Endonucleolytic cleavage at apurinic or apyrimidinic sites to products with a 5'-phosphate.</text>
        <dbReference type="EC" id="3.1.21.7"/>
    </reaction>
</comment>
<comment type="cofactor">
    <cofactor evidence="1">
        <name>Mg(2+)</name>
        <dbReference type="ChEBI" id="CHEBI:18420"/>
    </cofactor>
</comment>
<comment type="subcellular location">
    <subcellularLocation>
        <location evidence="1">Cytoplasm</location>
    </subcellularLocation>
</comment>
<comment type="similarity">
    <text evidence="1">Belongs to the endonuclease V family.</text>
</comment>
<accession>Q2P5R1</accession>
<organism>
    <name type="scientific">Xanthomonas oryzae pv. oryzae (strain MAFF 311018)</name>
    <dbReference type="NCBI Taxonomy" id="342109"/>
    <lineage>
        <taxon>Bacteria</taxon>
        <taxon>Pseudomonadati</taxon>
        <taxon>Pseudomonadota</taxon>
        <taxon>Gammaproteobacteria</taxon>
        <taxon>Lysobacterales</taxon>
        <taxon>Lysobacteraceae</taxon>
        <taxon>Xanthomonas</taxon>
    </lineage>
</organism>
<sequence>MAMHTNGPVFAGWDGSVIQAQQLQQQLAQRVLLHDEVSATPQLLAGFDVGFEDDGQSTRAAAVLLDAHTLLPLETHVARVPTSMPYVPGLLSFRELPALLQALALLSRTPDLVFIDGQGIAHPRRLGIAAHFGVVTGLPCIGIAKQRLAGSFAEPGPERGDHTPILLGGAQIGWALRSKPRCNPLIVSPGHRVSMQGALGWNLRTLRSYRLPEPTRLADRLASRRGKMPALAADTPLLF</sequence>
<keyword id="KW-0963">Cytoplasm</keyword>
<keyword id="KW-0227">DNA damage</keyword>
<keyword id="KW-0234">DNA repair</keyword>
<keyword id="KW-0255">Endonuclease</keyword>
<keyword id="KW-0378">Hydrolase</keyword>
<keyword id="KW-0460">Magnesium</keyword>
<keyword id="KW-0479">Metal-binding</keyword>
<keyword id="KW-0540">Nuclease</keyword>
<gene>
    <name evidence="1" type="primary">nfi</name>
    <name type="ordered locus">XOO1361</name>
</gene>